<keyword id="KW-1185">Reference proteome</keyword>
<keyword id="KW-0687">Ribonucleoprotein</keyword>
<keyword id="KW-0689">Ribosomal protein</keyword>
<comment type="function">
    <text evidence="1">Involved in the binding of tRNA to the ribosomes.</text>
</comment>
<comment type="subunit">
    <text evidence="1">Part of the 30S ribosomal subunit.</text>
</comment>
<comment type="similarity">
    <text evidence="1">Belongs to the universal ribosomal protein uS10 family.</text>
</comment>
<evidence type="ECO:0000255" key="1">
    <source>
        <dbReference type="HAMAP-Rule" id="MF_00508"/>
    </source>
</evidence>
<evidence type="ECO:0000305" key="2"/>
<dbReference type="EMBL" id="CP000489">
    <property type="protein sequence ID" value="ABL68870.1"/>
    <property type="molecule type" value="Genomic_DNA"/>
</dbReference>
<dbReference type="RefSeq" id="WP_010400227.1">
    <property type="nucleotide sequence ID" value="NC_008686.1"/>
</dbReference>
<dbReference type="SMR" id="A1B026"/>
<dbReference type="STRING" id="318586.Pden_0758"/>
<dbReference type="EnsemblBacteria" id="ABL68870">
    <property type="protein sequence ID" value="ABL68870"/>
    <property type="gene ID" value="Pden_0758"/>
</dbReference>
<dbReference type="GeneID" id="93451982"/>
<dbReference type="KEGG" id="pde:Pden_0758"/>
<dbReference type="eggNOG" id="COG0051">
    <property type="taxonomic scope" value="Bacteria"/>
</dbReference>
<dbReference type="HOGENOM" id="CLU_122625_1_3_5"/>
<dbReference type="OrthoDB" id="9804464at2"/>
<dbReference type="Proteomes" id="UP000000361">
    <property type="component" value="Chromosome 1"/>
</dbReference>
<dbReference type="GO" id="GO:1990904">
    <property type="term" value="C:ribonucleoprotein complex"/>
    <property type="evidence" value="ECO:0007669"/>
    <property type="project" value="UniProtKB-KW"/>
</dbReference>
<dbReference type="GO" id="GO:0005840">
    <property type="term" value="C:ribosome"/>
    <property type="evidence" value="ECO:0007669"/>
    <property type="project" value="UniProtKB-KW"/>
</dbReference>
<dbReference type="GO" id="GO:0003735">
    <property type="term" value="F:structural constituent of ribosome"/>
    <property type="evidence" value="ECO:0007669"/>
    <property type="project" value="InterPro"/>
</dbReference>
<dbReference type="GO" id="GO:0000049">
    <property type="term" value="F:tRNA binding"/>
    <property type="evidence" value="ECO:0007669"/>
    <property type="project" value="UniProtKB-UniRule"/>
</dbReference>
<dbReference type="GO" id="GO:0006412">
    <property type="term" value="P:translation"/>
    <property type="evidence" value="ECO:0007669"/>
    <property type="project" value="UniProtKB-UniRule"/>
</dbReference>
<dbReference type="FunFam" id="3.30.70.600:FF:000001">
    <property type="entry name" value="30S ribosomal protein S10"/>
    <property type="match status" value="1"/>
</dbReference>
<dbReference type="Gene3D" id="3.30.70.600">
    <property type="entry name" value="Ribosomal protein S10 domain"/>
    <property type="match status" value="1"/>
</dbReference>
<dbReference type="HAMAP" id="MF_00508">
    <property type="entry name" value="Ribosomal_uS10"/>
    <property type="match status" value="1"/>
</dbReference>
<dbReference type="InterPro" id="IPR001848">
    <property type="entry name" value="Ribosomal_uS10"/>
</dbReference>
<dbReference type="InterPro" id="IPR027486">
    <property type="entry name" value="Ribosomal_uS10_dom"/>
</dbReference>
<dbReference type="InterPro" id="IPR036838">
    <property type="entry name" value="Ribosomal_uS10_dom_sf"/>
</dbReference>
<dbReference type="NCBIfam" id="NF001861">
    <property type="entry name" value="PRK00596.1"/>
    <property type="match status" value="1"/>
</dbReference>
<dbReference type="NCBIfam" id="TIGR01049">
    <property type="entry name" value="rpsJ_bact"/>
    <property type="match status" value="1"/>
</dbReference>
<dbReference type="PANTHER" id="PTHR11700">
    <property type="entry name" value="30S RIBOSOMAL PROTEIN S10 FAMILY MEMBER"/>
    <property type="match status" value="1"/>
</dbReference>
<dbReference type="Pfam" id="PF00338">
    <property type="entry name" value="Ribosomal_S10"/>
    <property type="match status" value="1"/>
</dbReference>
<dbReference type="PRINTS" id="PR00971">
    <property type="entry name" value="RIBOSOMALS10"/>
</dbReference>
<dbReference type="SMART" id="SM01403">
    <property type="entry name" value="Ribosomal_S10"/>
    <property type="match status" value="1"/>
</dbReference>
<dbReference type="SUPFAM" id="SSF54999">
    <property type="entry name" value="Ribosomal protein S10"/>
    <property type="match status" value="1"/>
</dbReference>
<gene>
    <name evidence="1" type="primary">rpsJ</name>
    <name type="ordered locus">Pden_0758</name>
</gene>
<organism>
    <name type="scientific">Paracoccus denitrificans (strain Pd 1222)</name>
    <dbReference type="NCBI Taxonomy" id="318586"/>
    <lineage>
        <taxon>Bacteria</taxon>
        <taxon>Pseudomonadati</taxon>
        <taxon>Pseudomonadota</taxon>
        <taxon>Alphaproteobacteria</taxon>
        <taxon>Rhodobacterales</taxon>
        <taxon>Paracoccaceae</taxon>
        <taxon>Paracoccus</taxon>
    </lineage>
</organism>
<protein>
    <recommendedName>
        <fullName evidence="1">Small ribosomal subunit protein uS10</fullName>
    </recommendedName>
    <alternativeName>
        <fullName evidence="2">30S ribosomal protein S10</fullName>
    </alternativeName>
</protein>
<sequence length="102" mass="11628">MQSQNIRIRLKAFDYRVLDASTQEIVNTAKRTGAQVRGPIPLPNKIEKFTVLRGPHIDKKSRDQWEIRTHKRLLDIVDPTPQTVDALMKLDLAAGVDVEIKV</sequence>
<reference key="1">
    <citation type="submission" date="2006-12" db="EMBL/GenBank/DDBJ databases">
        <title>Complete sequence of chromosome 1 of Paracoccus denitrificans PD1222.</title>
        <authorList>
            <person name="Copeland A."/>
            <person name="Lucas S."/>
            <person name="Lapidus A."/>
            <person name="Barry K."/>
            <person name="Detter J.C."/>
            <person name="Glavina del Rio T."/>
            <person name="Hammon N."/>
            <person name="Israni S."/>
            <person name="Dalin E."/>
            <person name="Tice H."/>
            <person name="Pitluck S."/>
            <person name="Munk A.C."/>
            <person name="Brettin T."/>
            <person name="Bruce D."/>
            <person name="Han C."/>
            <person name="Tapia R."/>
            <person name="Gilna P."/>
            <person name="Schmutz J."/>
            <person name="Larimer F."/>
            <person name="Land M."/>
            <person name="Hauser L."/>
            <person name="Kyrpides N."/>
            <person name="Lykidis A."/>
            <person name="Spiro S."/>
            <person name="Richardson D.J."/>
            <person name="Moir J.W.B."/>
            <person name="Ferguson S.J."/>
            <person name="van Spanning R.J.M."/>
            <person name="Richardson P."/>
        </authorList>
    </citation>
    <scope>NUCLEOTIDE SEQUENCE [LARGE SCALE GENOMIC DNA]</scope>
    <source>
        <strain>Pd 1222</strain>
    </source>
</reference>
<name>RS10_PARDP</name>
<accession>A1B026</accession>
<feature type="chain" id="PRO_1000015074" description="Small ribosomal subunit protein uS10">
    <location>
        <begin position="1"/>
        <end position="102"/>
    </location>
</feature>
<proteinExistence type="inferred from homology"/>